<evidence type="ECO:0000250" key="1"/>
<evidence type="ECO:0000255" key="2"/>
<dbReference type="EMBL" id="L24467">
    <property type="protein sequence ID" value="AAA20064.1"/>
    <property type="molecule type" value="Unassigned_DNA"/>
</dbReference>
<dbReference type="EMBL" id="L24468">
    <property type="protein sequence ID" value="AAA20066.1"/>
    <property type="molecule type" value="Unassigned_DNA"/>
</dbReference>
<dbReference type="EMBL" id="L24469">
    <property type="protein sequence ID" value="AAA20068.1"/>
    <property type="molecule type" value="Unassigned_DNA"/>
</dbReference>
<dbReference type="SMR" id="P43175"/>
<dbReference type="Allergome" id="3073">
    <property type="allergen name" value="Amb p 5.0201"/>
</dbReference>
<dbReference type="Allergome" id="31">
    <property type="allergen name" value="Amb p 5"/>
</dbReference>
<dbReference type="GO" id="GO:0005576">
    <property type="term" value="C:extracellular region"/>
    <property type="evidence" value="ECO:0007669"/>
    <property type="project" value="UniProtKB-SubCell"/>
</dbReference>
<dbReference type="Gene3D" id="3.30.160.80">
    <property type="entry name" value="Amb V Allergen"/>
    <property type="match status" value="1"/>
</dbReference>
<dbReference type="InterPro" id="IPR005611">
    <property type="entry name" value="Amb_V_allergen"/>
</dbReference>
<dbReference type="InterPro" id="IPR036712">
    <property type="entry name" value="Amb_V_allergen_sf"/>
</dbReference>
<dbReference type="Pfam" id="PF03913">
    <property type="entry name" value="Ragweed_pollen"/>
    <property type="match status" value="1"/>
</dbReference>
<dbReference type="PIRSF" id="PIRSF002697">
    <property type="entry name" value="Amb_V_allergen"/>
    <property type="match status" value="1"/>
</dbReference>
<dbReference type="SMART" id="SM00816">
    <property type="entry name" value="Amb_V_allergen"/>
    <property type="match status" value="1"/>
</dbReference>
<dbReference type="SUPFAM" id="SSF57296">
    <property type="entry name" value="Amb V allergen"/>
    <property type="match status" value="1"/>
</dbReference>
<reference key="1">
    <citation type="journal article" date="1994" name="J. Immunol.">
        <title>Immunologic and molecular characterization of Amb p V allergens from Ambrosia psilostachya (western Ragweed) pollen.</title>
        <authorList>
            <person name="Ghosh B."/>
            <person name="Rafnar T."/>
            <person name="Perry M.P."/>
            <person name="Bassolino-Klimas D."/>
            <person name="Metzler W.J."/>
            <person name="Klapper D.G."/>
            <person name="Marsh D.G."/>
        </authorList>
    </citation>
    <scope>NUCLEOTIDE SEQUENCE</scope>
    <source>
        <tissue>Pollen</tissue>
    </source>
</reference>
<sequence>MNNEKNVSFEFIGSTNEVDEIKVMACYAAGSICGEKRGYCSSDPGRYCPWQVVCYESRKICAKNAAKMRMNVTKNTI</sequence>
<keyword id="KW-0020">Allergen</keyword>
<keyword id="KW-1015">Disulfide bond</keyword>
<keyword id="KW-0964">Secreted</keyword>
<keyword id="KW-0732">Signal</keyword>
<feature type="signal peptide" evidence="2">
    <location>
        <begin position="1"/>
        <end position="22"/>
    </location>
</feature>
<feature type="chain" id="PRO_0000021744" description="Pollen allergen Amb p 5b">
    <location>
        <begin position="23"/>
        <end position="77"/>
    </location>
</feature>
<feature type="disulfide bond" evidence="1">
    <location>
        <begin position="26"/>
        <end position="61"/>
    </location>
</feature>
<feature type="disulfide bond" evidence="1">
    <location>
        <begin position="33"/>
        <end position="48"/>
    </location>
</feature>
<feature type="disulfide bond" evidence="1">
    <location>
        <begin position="40"/>
        <end position="54"/>
    </location>
</feature>
<feature type="sequence variant" description="In clone B2.">
    <original>C</original>
    <variation>S</variation>
    <location>
        <position position="40"/>
    </location>
</feature>
<feature type="sequence variant" description="In clone B3.">
    <original>SSD</original>
    <variation>CTN</variation>
    <location>
        <begin position="41"/>
        <end position="43"/>
    </location>
</feature>
<proteinExistence type="evidence at protein level"/>
<name>MPA5B_AMBPS</name>
<protein>
    <recommendedName>
        <fullName>Pollen allergen Amb p 5b</fullName>
    </recommendedName>
    <alternativeName>
        <fullName>Allergen Amb p Vb</fullName>
    </alternativeName>
    <allergenName>Amb p 5b</allergenName>
</protein>
<organism>
    <name type="scientific">Ambrosia psilostachya</name>
    <name type="common">Western ragweed</name>
    <name type="synonym">Ambrosia coronopifolia</name>
    <dbReference type="NCBI Taxonomy" id="29715"/>
    <lineage>
        <taxon>Eukaryota</taxon>
        <taxon>Viridiplantae</taxon>
        <taxon>Streptophyta</taxon>
        <taxon>Embryophyta</taxon>
        <taxon>Tracheophyta</taxon>
        <taxon>Spermatophyta</taxon>
        <taxon>Magnoliopsida</taxon>
        <taxon>eudicotyledons</taxon>
        <taxon>Gunneridae</taxon>
        <taxon>Pentapetalae</taxon>
        <taxon>asterids</taxon>
        <taxon>campanulids</taxon>
        <taxon>Asterales</taxon>
        <taxon>Asteraceae</taxon>
        <taxon>Asteroideae</taxon>
        <taxon>Heliantheae alliance</taxon>
        <taxon>Heliantheae</taxon>
        <taxon>Ambrosia</taxon>
    </lineage>
</organism>
<comment type="subcellular location">
    <subcellularLocation>
        <location>Secreted</location>
    </subcellularLocation>
</comment>
<comment type="allergen">
    <text>Causes an allergic reaction in human.</text>
</comment>
<accession>P43175</accession>